<protein>
    <recommendedName>
        <fullName evidence="1">Small ribosomal subunit protein uS8</fullName>
    </recommendedName>
    <alternativeName>
        <fullName evidence="2">30S ribosomal protein S8</fullName>
    </alternativeName>
</protein>
<reference key="1">
    <citation type="journal article" date="2010" name="J. Bacteriol.">
        <title>Whole genome sequences of two Xylella fastidiosa strains (M12 and M23) causing almond leaf scorch disease in California.</title>
        <authorList>
            <person name="Chen J."/>
            <person name="Xie G."/>
            <person name="Han S."/>
            <person name="Chertkov O."/>
            <person name="Sims D."/>
            <person name="Civerolo E.L."/>
        </authorList>
    </citation>
    <scope>NUCLEOTIDE SEQUENCE [LARGE SCALE GENOMIC DNA]</scope>
    <source>
        <strain>M23</strain>
    </source>
</reference>
<feature type="chain" id="PRO_1000140639" description="Small ribosomal subunit protein uS8">
    <location>
        <begin position="1"/>
        <end position="132"/>
    </location>
</feature>
<keyword id="KW-0687">Ribonucleoprotein</keyword>
<keyword id="KW-0689">Ribosomal protein</keyword>
<keyword id="KW-0694">RNA-binding</keyword>
<keyword id="KW-0699">rRNA-binding</keyword>
<gene>
    <name evidence="1" type="primary">rpsH</name>
    <name type="ordered locus">XfasM23_0447</name>
</gene>
<evidence type="ECO:0000255" key="1">
    <source>
        <dbReference type="HAMAP-Rule" id="MF_01302"/>
    </source>
</evidence>
<evidence type="ECO:0000305" key="2"/>
<comment type="function">
    <text evidence="1">One of the primary rRNA binding proteins, it binds directly to 16S rRNA central domain where it helps coordinate assembly of the platform of the 30S subunit.</text>
</comment>
<comment type="subunit">
    <text evidence="1">Part of the 30S ribosomal subunit. Contacts proteins S5 and S12.</text>
</comment>
<comment type="similarity">
    <text evidence="1">Belongs to the universal ribosomal protein uS8 family.</text>
</comment>
<sequence>MSMTDPIADMLVRIKNAASVGKPNVRFPFSKVKLAIALVLKNEGYIFDAKVIQSDNSKSDIEVVLKYFEGRPVIRILKRVSRSGLRKYCGKAELPEVLGGLGVSIISTSKGIMTDSKARESGVGGEVLCFVA</sequence>
<proteinExistence type="inferred from homology"/>
<organism>
    <name type="scientific">Xylella fastidiosa (strain M23)</name>
    <dbReference type="NCBI Taxonomy" id="405441"/>
    <lineage>
        <taxon>Bacteria</taxon>
        <taxon>Pseudomonadati</taxon>
        <taxon>Pseudomonadota</taxon>
        <taxon>Gammaproteobacteria</taxon>
        <taxon>Lysobacterales</taxon>
        <taxon>Lysobacteraceae</taxon>
        <taxon>Xylella</taxon>
    </lineage>
</organism>
<accession>B2I8I3</accession>
<name>RS8_XYLF2</name>
<dbReference type="EMBL" id="CP001011">
    <property type="protein sequence ID" value="ACB91894.1"/>
    <property type="molecule type" value="Genomic_DNA"/>
</dbReference>
<dbReference type="RefSeq" id="WP_004090119.1">
    <property type="nucleotide sequence ID" value="NC_010577.1"/>
</dbReference>
<dbReference type="SMR" id="B2I8I3"/>
<dbReference type="GeneID" id="93904153"/>
<dbReference type="KEGG" id="xfn:XfasM23_0447"/>
<dbReference type="HOGENOM" id="CLU_098428_0_0_6"/>
<dbReference type="Proteomes" id="UP000001698">
    <property type="component" value="Chromosome"/>
</dbReference>
<dbReference type="GO" id="GO:1990904">
    <property type="term" value="C:ribonucleoprotein complex"/>
    <property type="evidence" value="ECO:0007669"/>
    <property type="project" value="UniProtKB-KW"/>
</dbReference>
<dbReference type="GO" id="GO:0005840">
    <property type="term" value="C:ribosome"/>
    <property type="evidence" value="ECO:0007669"/>
    <property type="project" value="UniProtKB-KW"/>
</dbReference>
<dbReference type="GO" id="GO:0019843">
    <property type="term" value="F:rRNA binding"/>
    <property type="evidence" value="ECO:0007669"/>
    <property type="project" value="UniProtKB-UniRule"/>
</dbReference>
<dbReference type="GO" id="GO:0003735">
    <property type="term" value="F:structural constituent of ribosome"/>
    <property type="evidence" value="ECO:0007669"/>
    <property type="project" value="InterPro"/>
</dbReference>
<dbReference type="GO" id="GO:0006412">
    <property type="term" value="P:translation"/>
    <property type="evidence" value="ECO:0007669"/>
    <property type="project" value="UniProtKB-UniRule"/>
</dbReference>
<dbReference type="FunFam" id="3.30.1490.10:FF:000001">
    <property type="entry name" value="30S ribosomal protein S8"/>
    <property type="match status" value="1"/>
</dbReference>
<dbReference type="Gene3D" id="3.30.1370.30">
    <property type="match status" value="1"/>
</dbReference>
<dbReference type="Gene3D" id="3.30.1490.10">
    <property type="match status" value="1"/>
</dbReference>
<dbReference type="HAMAP" id="MF_01302_B">
    <property type="entry name" value="Ribosomal_uS8_B"/>
    <property type="match status" value="1"/>
</dbReference>
<dbReference type="InterPro" id="IPR000630">
    <property type="entry name" value="Ribosomal_uS8"/>
</dbReference>
<dbReference type="InterPro" id="IPR047863">
    <property type="entry name" value="Ribosomal_uS8_CS"/>
</dbReference>
<dbReference type="InterPro" id="IPR035987">
    <property type="entry name" value="Ribosomal_uS8_sf"/>
</dbReference>
<dbReference type="NCBIfam" id="NF001109">
    <property type="entry name" value="PRK00136.1"/>
    <property type="match status" value="1"/>
</dbReference>
<dbReference type="PANTHER" id="PTHR11758">
    <property type="entry name" value="40S RIBOSOMAL PROTEIN S15A"/>
    <property type="match status" value="1"/>
</dbReference>
<dbReference type="Pfam" id="PF00410">
    <property type="entry name" value="Ribosomal_S8"/>
    <property type="match status" value="1"/>
</dbReference>
<dbReference type="SUPFAM" id="SSF56047">
    <property type="entry name" value="Ribosomal protein S8"/>
    <property type="match status" value="1"/>
</dbReference>
<dbReference type="PROSITE" id="PS00053">
    <property type="entry name" value="RIBOSOMAL_S8"/>
    <property type="match status" value="1"/>
</dbReference>